<evidence type="ECO:0000255" key="1">
    <source>
        <dbReference type="HAMAP-Rule" id="MF_03174"/>
    </source>
</evidence>
<evidence type="ECO:0000255" key="2">
    <source>
        <dbReference type="PROSITE-ProRule" id="PRU01357"/>
    </source>
</evidence>
<keyword id="KW-0031">Aminopeptidase</keyword>
<keyword id="KW-0963">Cytoplasm</keyword>
<keyword id="KW-0378">Hydrolase</keyword>
<keyword id="KW-0479">Metal-binding</keyword>
<keyword id="KW-0645">Protease</keyword>
<keyword id="KW-1185">Reference proteome</keyword>
<keyword id="KW-0862">Zinc</keyword>
<keyword id="KW-0863">Zinc-finger</keyword>
<organism>
    <name type="scientific">Gallus gallus</name>
    <name type="common">Chicken</name>
    <dbReference type="NCBI Taxonomy" id="9031"/>
    <lineage>
        <taxon>Eukaryota</taxon>
        <taxon>Metazoa</taxon>
        <taxon>Chordata</taxon>
        <taxon>Craniata</taxon>
        <taxon>Vertebrata</taxon>
        <taxon>Euteleostomi</taxon>
        <taxon>Archelosauria</taxon>
        <taxon>Archosauria</taxon>
        <taxon>Dinosauria</taxon>
        <taxon>Saurischia</taxon>
        <taxon>Theropoda</taxon>
        <taxon>Coelurosauria</taxon>
        <taxon>Aves</taxon>
        <taxon>Neognathae</taxon>
        <taxon>Galloanserae</taxon>
        <taxon>Galliformes</taxon>
        <taxon>Phasianidae</taxon>
        <taxon>Phasianinae</taxon>
        <taxon>Gallus</taxon>
    </lineage>
</organism>
<accession>Q5ZIM5</accession>
<feature type="chain" id="PRO_0000323736" description="Methionine aminopeptidase 1">
    <location>
        <begin position="1"/>
        <end position="385"/>
    </location>
</feature>
<feature type="zinc finger region" description="C6H2-type" evidence="2">
    <location>
        <begin position="6"/>
        <end position="59"/>
    </location>
</feature>
<feature type="binding site" evidence="1">
    <location>
        <position position="9"/>
    </location>
    <ligand>
        <name>Zn(2+)</name>
        <dbReference type="ChEBI" id="CHEBI:29105"/>
        <label>1</label>
    </ligand>
</feature>
<feature type="binding site" evidence="1">
    <location>
        <position position="14"/>
    </location>
    <ligand>
        <name>Zn(2+)</name>
        <dbReference type="ChEBI" id="CHEBI:29105"/>
        <label>1</label>
    </ligand>
</feature>
<feature type="binding site" evidence="1">
    <location>
        <position position="22"/>
    </location>
    <ligand>
        <name>Zn(2+)</name>
        <dbReference type="ChEBI" id="CHEBI:29105"/>
        <label>2</label>
    </ligand>
</feature>
<feature type="binding site" evidence="1">
    <location>
        <position position="25"/>
    </location>
    <ligand>
        <name>Zn(2+)</name>
        <dbReference type="ChEBI" id="CHEBI:29105"/>
        <label>2</label>
    </ligand>
</feature>
<feature type="binding site" evidence="1">
    <location>
        <position position="36"/>
    </location>
    <ligand>
        <name>Zn(2+)</name>
        <dbReference type="ChEBI" id="CHEBI:29105"/>
        <label>1</label>
    </ligand>
</feature>
<feature type="binding site" evidence="1">
    <location>
        <position position="40"/>
    </location>
    <ligand>
        <name>Zn(2+)</name>
        <dbReference type="ChEBI" id="CHEBI:29105"/>
        <label>1</label>
    </ligand>
</feature>
<feature type="binding site" evidence="1">
    <location>
        <position position="48"/>
    </location>
    <ligand>
        <name>Zn(2+)</name>
        <dbReference type="ChEBI" id="CHEBI:29105"/>
        <label>2</label>
    </ligand>
</feature>
<feature type="binding site" evidence="1">
    <location>
        <position position="52"/>
    </location>
    <ligand>
        <name>Zn(2+)</name>
        <dbReference type="ChEBI" id="CHEBI:29105"/>
        <label>2</label>
    </ligand>
</feature>
<feature type="binding site" evidence="1">
    <location>
        <position position="203"/>
    </location>
    <ligand>
        <name>a protein</name>
        <dbReference type="ChEBI" id="CHEBI:16541"/>
    </ligand>
    <ligandPart>
        <name>N-terminal L-methionine residue</name>
        <dbReference type="ChEBI" id="CHEBI:64731"/>
    </ligandPart>
</feature>
<feature type="binding site" evidence="1">
    <location>
        <position position="220"/>
    </location>
    <ligand>
        <name>Zn(2+)</name>
        <dbReference type="ChEBI" id="CHEBI:29105"/>
        <label>3</label>
    </ligand>
</feature>
<feature type="binding site" evidence="1">
    <location>
        <position position="231"/>
    </location>
    <ligand>
        <name>Zn(2+)</name>
        <dbReference type="ChEBI" id="CHEBI:29105"/>
        <label>3</label>
    </ligand>
</feature>
<feature type="binding site" evidence="1">
    <location>
        <position position="231"/>
    </location>
    <ligand>
        <name>Zn(2+)</name>
        <dbReference type="ChEBI" id="CHEBI:29105"/>
        <label>4</label>
        <note>catalytic</note>
    </ligand>
</feature>
<feature type="binding site" evidence="1">
    <location>
        <position position="294"/>
    </location>
    <ligand>
        <name>Zn(2+)</name>
        <dbReference type="ChEBI" id="CHEBI:29105"/>
        <label>4</label>
        <note>catalytic</note>
    </ligand>
</feature>
<feature type="binding site" evidence="1">
    <location>
        <position position="301"/>
    </location>
    <ligand>
        <name>a protein</name>
        <dbReference type="ChEBI" id="CHEBI:16541"/>
    </ligand>
    <ligandPart>
        <name>N-terminal L-methionine residue</name>
        <dbReference type="ChEBI" id="CHEBI:64731"/>
    </ligandPart>
</feature>
<feature type="binding site" evidence="1">
    <location>
        <position position="327"/>
    </location>
    <ligand>
        <name>Zn(2+)</name>
        <dbReference type="ChEBI" id="CHEBI:29105"/>
        <label>4</label>
        <note>catalytic</note>
    </ligand>
</feature>
<feature type="binding site" evidence="1">
    <location>
        <position position="358"/>
    </location>
    <ligand>
        <name>Zn(2+)</name>
        <dbReference type="ChEBI" id="CHEBI:29105"/>
        <label>3</label>
    </ligand>
</feature>
<feature type="binding site" evidence="1">
    <location>
        <position position="358"/>
    </location>
    <ligand>
        <name>Zn(2+)</name>
        <dbReference type="ChEBI" id="CHEBI:29105"/>
        <label>4</label>
        <note>catalytic</note>
    </ligand>
</feature>
<proteinExistence type="evidence at transcript level"/>
<name>MAP1_CHICK</name>
<reference key="1">
    <citation type="journal article" date="2005" name="Genome Biol.">
        <title>Full-length cDNAs from chicken bursal lymphocytes to facilitate gene function analysis.</title>
        <authorList>
            <person name="Caldwell R.B."/>
            <person name="Kierzek A.M."/>
            <person name="Arakawa H."/>
            <person name="Bezzubov Y."/>
            <person name="Zaim J."/>
            <person name="Fiedler P."/>
            <person name="Kutter S."/>
            <person name="Blagodatski A."/>
            <person name="Kostovska D."/>
            <person name="Koter M."/>
            <person name="Plachy J."/>
            <person name="Carninci P."/>
            <person name="Hayashizaki Y."/>
            <person name="Buerstedde J.-M."/>
        </authorList>
    </citation>
    <scope>NUCLEOTIDE SEQUENCE [LARGE SCALE MRNA]</scope>
    <source>
        <strain>CB</strain>
        <tissue>Bursa of Fabricius</tissue>
    </source>
</reference>
<gene>
    <name type="primary">METAP1</name>
    <name type="ORF">RCJMB04_24o19</name>
</gene>
<protein>
    <recommendedName>
        <fullName evidence="1">Methionine aminopeptidase 1</fullName>
        <shortName evidence="1">MAP 1</shortName>
        <shortName evidence="1">MetAP 1</shortName>
        <ecNumber evidence="1">3.4.11.18</ecNumber>
    </recommendedName>
    <alternativeName>
        <fullName evidence="1">Peptidase M 1</fullName>
    </alternativeName>
</protein>
<dbReference type="EC" id="3.4.11.18" evidence="1"/>
<dbReference type="EMBL" id="AJ720759">
    <property type="protein sequence ID" value="CAG32418.1"/>
    <property type="molecule type" value="mRNA"/>
</dbReference>
<dbReference type="RefSeq" id="NP_001026322.1">
    <property type="nucleotide sequence ID" value="NM_001031151.2"/>
</dbReference>
<dbReference type="SMR" id="Q5ZIM5"/>
<dbReference type="FunCoup" id="Q5ZIM5">
    <property type="interactions" value="1834"/>
</dbReference>
<dbReference type="STRING" id="9031.ENSGALP00000019961"/>
<dbReference type="MEROPS" id="M24.017"/>
<dbReference type="PaxDb" id="9031-ENSGALP00000040704"/>
<dbReference type="Ensembl" id="ENSGALT00010010802.1">
    <property type="protein sequence ID" value="ENSGALP00010006215.1"/>
    <property type="gene ID" value="ENSGALG00010004641.1"/>
</dbReference>
<dbReference type="GeneID" id="422704"/>
<dbReference type="KEGG" id="gga:422704"/>
<dbReference type="CTD" id="23173"/>
<dbReference type="VEuPathDB" id="HostDB:geneid_422704"/>
<dbReference type="eggNOG" id="KOG2738">
    <property type="taxonomic scope" value="Eukaryota"/>
</dbReference>
<dbReference type="GeneTree" id="ENSGT00940000158205"/>
<dbReference type="HOGENOM" id="CLU_015857_2_1_1"/>
<dbReference type="InParanoid" id="Q5ZIM5"/>
<dbReference type="OMA" id="FYGDHAY"/>
<dbReference type="OrthoDB" id="3209743at2759"/>
<dbReference type="PhylomeDB" id="Q5ZIM5"/>
<dbReference type="PRO" id="PR:Q5ZIM5"/>
<dbReference type="Proteomes" id="UP000000539">
    <property type="component" value="Chromosome 4"/>
</dbReference>
<dbReference type="Bgee" id="ENSGALG00000012239">
    <property type="expression patterns" value="Expressed in skeletal muscle tissue and 13 other cell types or tissues"/>
</dbReference>
<dbReference type="GO" id="GO:0005829">
    <property type="term" value="C:cytosol"/>
    <property type="evidence" value="ECO:0000318"/>
    <property type="project" value="GO_Central"/>
</dbReference>
<dbReference type="GO" id="GO:0022626">
    <property type="term" value="C:cytosolic ribosome"/>
    <property type="evidence" value="ECO:0007669"/>
    <property type="project" value="UniProtKB-UniRule"/>
</dbReference>
<dbReference type="GO" id="GO:0004239">
    <property type="term" value="F:initiator methionyl aminopeptidase activity"/>
    <property type="evidence" value="ECO:0007669"/>
    <property type="project" value="UniProtKB-UniRule"/>
</dbReference>
<dbReference type="GO" id="GO:0070006">
    <property type="term" value="F:metalloaminopeptidase activity"/>
    <property type="evidence" value="ECO:0000318"/>
    <property type="project" value="GO_Central"/>
</dbReference>
<dbReference type="GO" id="GO:0008270">
    <property type="term" value="F:zinc ion binding"/>
    <property type="evidence" value="ECO:0007669"/>
    <property type="project" value="UniProtKB-KW"/>
</dbReference>
<dbReference type="GO" id="GO:0006508">
    <property type="term" value="P:proteolysis"/>
    <property type="evidence" value="ECO:0007669"/>
    <property type="project" value="UniProtKB-KW"/>
</dbReference>
<dbReference type="CDD" id="cd01086">
    <property type="entry name" value="MetAP1"/>
    <property type="match status" value="1"/>
</dbReference>
<dbReference type="FunFam" id="3.90.230.10:FF:000010">
    <property type="entry name" value="Methionine aminopeptidase"/>
    <property type="match status" value="1"/>
</dbReference>
<dbReference type="Gene3D" id="3.90.230.10">
    <property type="entry name" value="Creatinase/methionine aminopeptidase superfamily"/>
    <property type="match status" value="1"/>
</dbReference>
<dbReference type="HAMAP" id="MF_01974">
    <property type="entry name" value="MetAP_1"/>
    <property type="match status" value="1"/>
</dbReference>
<dbReference type="InterPro" id="IPR036005">
    <property type="entry name" value="Creatinase/aminopeptidase-like"/>
</dbReference>
<dbReference type="InterPro" id="IPR000994">
    <property type="entry name" value="Pept_M24"/>
</dbReference>
<dbReference type="InterPro" id="IPR001714">
    <property type="entry name" value="Pept_M24_MAP"/>
</dbReference>
<dbReference type="InterPro" id="IPR002467">
    <property type="entry name" value="Pept_M24A_MAP1"/>
</dbReference>
<dbReference type="InterPro" id="IPR031615">
    <property type="entry name" value="Zfn-C6H2"/>
</dbReference>
<dbReference type="NCBIfam" id="TIGR00500">
    <property type="entry name" value="met_pdase_I"/>
    <property type="match status" value="1"/>
</dbReference>
<dbReference type="PANTHER" id="PTHR43330">
    <property type="entry name" value="METHIONINE AMINOPEPTIDASE"/>
    <property type="match status" value="1"/>
</dbReference>
<dbReference type="PANTHER" id="PTHR43330:SF7">
    <property type="entry name" value="METHIONINE AMINOPEPTIDASE 1"/>
    <property type="match status" value="1"/>
</dbReference>
<dbReference type="Pfam" id="PF00557">
    <property type="entry name" value="Peptidase_M24"/>
    <property type="match status" value="1"/>
</dbReference>
<dbReference type="Pfam" id="PF15801">
    <property type="entry name" value="zf-C6H2"/>
    <property type="match status" value="1"/>
</dbReference>
<dbReference type="PRINTS" id="PR00599">
    <property type="entry name" value="MAPEPTIDASE"/>
</dbReference>
<dbReference type="SUPFAM" id="SSF55920">
    <property type="entry name" value="Creatinase/aminopeptidase"/>
    <property type="match status" value="1"/>
</dbReference>
<dbReference type="PROSITE" id="PS00680">
    <property type="entry name" value="MAP_1"/>
    <property type="match status" value="1"/>
</dbReference>
<dbReference type="PROSITE" id="PS52013">
    <property type="entry name" value="ZF_C6H2"/>
    <property type="match status" value="1"/>
</dbReference>
<comment type="function">
    <text evidence="1">Cotranslationally removes the N-terminal methionine from nascent proteins. The N-terminal methionine is often cleaved when the second residue in the primary sequence is small and uncharged (Met-Ala-, Cys, Gly, Pro, Ser, Thr, or Val).</text>
</comment>
<comment type="catalytic activity">
    <reaction evidence="1">
        <text>Release of N-terminal amino acids, preferentially methionine, from peptides and arylamides.</text>
        <dbReference type="EC" id="3.4.11.18"/>
    </reaction>
</comment>
<comment type="cofactor">
    <cofactor evidence="1">
        <name>Zn(2+)</name>
        <dbReference type="ChEBI" id="CHEBI:29105"/>
    </cofactor>
    <cofactor evidence="1">
        <name>Co(2+)</name>
        <dbReference type="ChEBI" id="CHEBI:48828"/>
    </cofactor>
    <cofactor evidence="1">
        <name>Mn(2+)</name>
        <dbReference type="ChEBI" id="CHEBI:29035"/>
    </cofactor>
    <cofactor evidence="1">
        <name>Fe(2+)</name>
        <dbReference type="ChEBI" id="CHEBI:29033"/>
    </cofactor>
    <text evidence="1">Binds 2 divalent metal cations per subunit. Has a high-affinity and a low affinity metal-binding site. The true nature of the physiological cofactor is under debate. The enzyme is active with zinc, cobalt, manganese or divalent iron ions. Has high activity with zinc; zinc cofactor is transferred into the active site region by the ZNG1 zinc chaperone.</text>
</comment>
<comment type="subunit">
    <text evidence="1">Associates with the 60S ribosomal subunit of the 80S translational complex.</text>
</comment>
<comment type="subcellular location">
    <subcellularLocation>
        <location evidence="1">Cytoplasm</location>
    </subcellularLocation>
</comment>
<comment type="similarity">
    <text evidence="1">Belongs to the peptidase M24A family. Methionine aminopeptidase type 1 subfamily.</text>
</comment>
<sequence length="385" mass="43121">MAAVETRVCETAGCSSEAKLQCPTCLKLGIQGSYFCSQECFKGSWATHKLLHKKAKDEKAKREVSSWTLEGDINTNPWSGYRYTGKLRPHYPLTPTRPVPSYIQRPDYADHPLGMSESEQALKGTSQIKILSPEDIEGMRVVCRLAREVLDVAAMMVKAGVTTEEIDHAVHLACIARNCYPSPLNYYNFPKSCCTSVNEVICHGIPDRRPLQEGDIVNVDITVYRNGYHGDLNETFYVGEVDEGAKRLVQTTYECLMQAIDAVKPGVRYRELGNIIQKHAQANGFSVVRSYCGHGIHKLFHTAPNVPHYAKNKAVGVMKPGHVFTIEPMICEGGWQDETWPDGWTAVTRDGKRSAQFEHTLLVTDTGCEILTRRLDSIRPHFMSQ</sequence>